<organism>
    <name type="scientific">Hydrogenovibrio crunogenus (strain DSM 25203 / XCL-2)</name>
    <name type="common">Thiomicrospira crunogena</name>
    <dbReference type="NCBI Taxonomy" id="317025"/>
    <lineage>
        <taxon>Bacteria</taxon>
        <taxon>Pseudomonadati</taxon>
        <taxon>Pseudomonadota</taxon>
        <taxon>Gammaproteobacteria</taxon>
        <taxon>Thiotrichales</taxon>
        <taxon>Piscirickettsiaceae</taxon>
        <taxon>Hydrogenovibrio</taxon>
    </lineage>
</organism>
<gene>
    <name evidence="1" type="primary">rplO</name>
    <name type="ordered locus">Tcr_0314</name>
</gene>
<comment type="function">
    <text evidence="1">Binds to the 23S rRNA.</text>
</comment>
<comment type="subunit">
    <text evidence="1">Part of the 50S ribosomal subunit.</text>
</comment>
<comment type="similarity">
    <text evidence="1">Belongs to the universal ribosomal protein uL15 family.</text>
</comment>
<keyword id="KW-0687">Ribonucleoprotein</keyword>
<keyword id="KW-0689">Ribosomal protein</keyword>
<keyword id="KW-0694">RNA-binding</keyword>
<keyword id="KW-0699">rRNA-binding</keyword>
<proteinExistence type="inferred from homology"/>
<accession>Q31IW3</accession>
<protein>
    <recommendedName>
        <fullName evidence="1">Large ribosomal subunit protein uL15</fullName>
    </recommendedName>
    <alternativeName>
        <fullName evidence="3">50S ribosomal protein L15</fullName>
    </alternativeName>
</protein>
<sequence length="144" mass="14994">MHLNTLKPAEGAKKLAKRKGRGQGSGNGKMAGRGHKGQKSRSGGMPKIGFEGGQMPLQRRLPKVGFTSRKSAYAAEIRLDVLSSVDSDVIDLPALKAANLVSEKIKTVKVINSGEMKKAVKISGLKVTAGAKATIEAAGGSVEV</sequence>
<name>RL15_HYDCU</name>
<evidence type="ECO:0000255" key="1">
    <source>
        <dbReference type="HAMAP-Rule" id="MF_01341"/>
    </source>
</evidence>
<evidence type="ECO:0000256" key="2">
    <source>
        <dbReference type="SAM" id="MobiDB-lite"/>
    </source>
</evidence>
<evidence type="ECO:0000305" key="3"/>
<dbReference type="EMBL" id="CP000109">
    <property type="protein sequence ID" value="ABB40910.1"/>
    <property type="molecule type" value="Genomic_DNA"/>
</dbReference>
<dbReference type="SMR" id="Q31IW3"/>
<dbReference type="STRING" id="317025.Tcr_0314"/>
<dbReference type="KEGG" id="tcx:Tcr_0314"/>
<dbReference type="eggNOG" id="COG0200">
    <property type="taxonomic scope" value="Bacteria"/>
</dbReference>
<dbReference type="HOGENOM" id="CLU_055188_4_2_6"/>
<dbReference type="OrthoDB" id="9810293at2"/>
<dbReference type="GO" id="GO:0022625">
    <property type="term" value="C:cytosolic large ribosomal subunit"/>
    <property type="evidence" value="ECO:0007669"/>
    <property type="project" value="TreeGrafter"/>
</dbReference>
<dbReference type="GO" id="GO:0019843">
    <property type="term" value="F:rRNA binding"/>
    <property type="evidence" value="ECO:0007669"/>
    <property type="project" value="UniProtKB-UniRule"/>
</dbReference>
<dbReference type="GO" id="GO:0003735">
    <property type="term" value="F:structural constituent of ribosome"/>
    <property type="evidence" value="ECO:0007669"/>
    <property type="project" value="InterPro"/>
</dbReference>
<dbReference type="GO" id="GO:0006412">
    <property type="term" value="P:translation"/>
    <property type="evidence" value="ECO:0007669"/>
    <property type="project" value="UniProtKB-UniRule"/>
</dbReference>
<dbReference type="Gene3D" id="3.100.10.10">
    <property type="match status" value="1"/>
</dbReference>
<dbReference type="HAMAP" id="MF_01341">
    <property type="entry name" value="Ribosomal_uL15"/>
    <property type="match status" value="1"/>
</dbReference>
<dbReference type="InterPro" id="IPR030878">
    <property type="entry name" value="Ribosomal_uL15"/>
</dbReference>
<dbReference type="InterPro" id="IPR021131">
    <property type="entry name" value="Ribosomal_uL15/eL18"/>
</dbReference>
<dbReference type="InterPro" id="IPR036227">
    <property type="entry name" value="Ribosomal_uL15/eL18_sf"/>
</dbReference>
<dbReference type="InterPro" id="IPR005749">
    <property type="entry name" value="Ribosomal_uL15_bac-type"/>
</dbReference>
<dbReference type="NCBIfam" id="TIGR01071">
    <property type="entry name" value="rplO_bact"/>
    <property type="match status" value="1"/>
</dbReference>
<dbReference type="PANTHER" id="PTHR12934">
    <property type="entry name" value="50S RIBOSOMAL PROTEIN L15"/>
    <property type="match status" value="1"/>
</dbReference>
<dbReference type="PANTHER" id="PTHR12934:SF11">
    <property type="entry name" value="LARGE RIBOSOMAL SUBUNIT PROTEIN UL15M"/>
    <property type="match status" value="1"/>
</dbReference>
<dbReference type="Pfam" id="PF00828">
    <property type="entry name" value="Ribosomal_L27A"/>
    <property type="match status" value="1"/>
</dbReference>
<dbReference type="SUPFAM" id="SSF52080">
    <property type="entry name" value="Ribosomal proteins L15p and L18e"/>
    <property type="match status" value="1"/>
</dbReference>
<feature type="chain" id="PRO_0000251579" description="Large ribosomal subunit protein uL15">
    <location>
        <begin position="1"/>
        <end position="144"/>
    </location>
</feature>
<feature type="region of interest" description="Disordered" evidence="2">
    <location>
        <begin position="1"/>
        <end position="54"/>
    </location>
</feature>
<feature type="compositionally biased region" description="Gly residues" evidence="2">
    <location>
        <begin position="22"/>
        <end position="31"/>
    </location>
</feature>
<reference key="1">
    <citation type="journal article" date="2006" name="PLoS Biol.">
        <title>The genome of deep-sea vent chemolithoautotroph Thiomicrospira crunogena XCL-2.</title>
        <authorList>
            <person name="Scott K.M."/>
            <person name="Sievert S.M."/>
            <person name="Abril F.N."/>
            <person name="Ball L.A."/>
            <person name="Barrett C.J."/>
            <person name="Blake R.A."/>
            <person name="Boller A.J."/>
            <person name="Chain P.S.G."/>
            <person name="Clark J.A."/>
            <person name="Davis C.R."/>
            <person name="Detter C."/>
            <person name="Do K.F."/>
            <person name="Dobrinski K.P."/>
            <person name="Faza B.I."/>
            <person name="Fitzpatrick K.A."/>
            <person name="Freyermuth S.K."/>
            <person name="Harmer T.L."/>
            <person name="Hauser L.J."/>
            <person name="Huegler M."/>
            <person name="Kerfeld C.A."/>
            <person name="Klotz M.G."/>
            <person name="Kong W.W."/>
            <person name="Land M."/>
            <person name="Lapidus A."/>
            <person name="Larimer F.W."/>
            <person name="Longo D.L."/>
            <person name="Lucas S."/>
            <person name="Malfatti S.A."/>
            <person name="Massey S.E."/>
            <person name="Martin D.D."/>
            <person name="McCuddin Z."/>
            <person name="Meyer F."/>
            <person name="Moore J.L."/>
            <person name="Ocampo L.H. Jr."/>
            <person name="Paul J.H."/>
            <person name="Paulsen I.T."/>
            <person name="Reep D.K."/>
            <person name="Ren Q."/>
            <person name="Ross R.L."/>
            <person name="Sato P.Y."/>
            <person name="Thomas P."/>
            <person name="Tinkham L.E."/>
            <person name="Zeruth G.T."/>
        </authorList>
    </citation>
    <scope>NUCLEOTIDE SEQUENCE [LARGE SCALE GENOMIC DNA]</scope>
    <source>
        <strain>DSM 25203 / XCL-2</strain>
    </source>
</reference>